<comment type="function">
    <text evidence="1">Produces ATP from ADP in the presence of a proton gradient across the membrane.</text>
</comment>
<comment type="subunit">
    <text>F-type ATPases have 2 components, CF(1) - the catalytic core - and CF(0) - the membrane proton channel. CF(1) has five subunits: alpha(3), beta(3), gamma(1), delta(1), epsilon(1). CF(0) has three main subunits: a, b and c.</text>
</comment>
<comment type="subcellular location">
    <subcellularLocation>
        <location evidence="1">Cell inner membrane</location>
        <topology evidence="1">Peripheral membrane protein</topology>
    </subcellularLocation>
</comment>
<comment type="similarity">
    <text evidence="1">Belongs to the ATPase epsilon chain family.</text>
</comment>
<protein>
    <recommendedName>
        <fullName evidence="1">ATP synthase epsilon chain</fullName>
    </recommendedName>
    <alternativeName>
        <fullName evidence="1">ATP synthase F1 sector epsilon subunit</fullName>
    </alternativeName>
    <alternativeName>
        <fullName evidence="1">F-ATPase epsilon subunit</fullName>
    </alternativeName>
</protein>
<dbReference type="EMBL" id="CP000089">
    <property type="protein sequence ID" value="AAZ48841.1"/>
    <property type="molecule type" value="Genomic_DNA"/>
</dbReference>
<dbReference type="SMR" id="Q477Z0"/>
<dbReference type="STRING" id="159087.Daro_4115"/>
<dbReference type="KEGG" id="dar:Daro_4115"/>
<dbReference type="eggNOG" id="COG0355">
    <property type="taxonomic scope" value="Bacteria"/>
</dbReference>
<dbReference type="HOGENOM" id="CLU_084338_2_0_4"/>
<dbReference type="OrthoDB" id="9791445at2"/>
<dbReference type="GO" id="GO:0005886">
    <property type="term" value="C:plasma membrane"/>
    <property type="evidence" value="ECO:0007669"/>
    <property type="project" value="UniProtKB-SubCell"/>
</dbReference>
<dbReference type="GO" id="GO:0045259">
    <property type="term" value="C:proton-transporting ATP synthase complex"/>
    <property type="evidence" value="ECO:0007669"/>
    <property type="project" value="UniProtKB-KW"/>
</dbReference>
<dbReference type="GO" id="GO:0005524">
    <property type="term" value="F:ATP binding"/>
    <property type="evidence" value="ECO:0007669"/>
    <property type="project" value="UniProtKB-UniRule"/>
</dbReference>
<dbReference type="GO" id="GO:0046933">
    <property type="term" value="F:proton-transporting ATP synthase activity, rotational mechanism"/>
    <property type="evidence" value="ECO:0007669"/>
    <property type="project" value="UniProtKB-UniRule"/>
</dbReference>
<dbReference type="CDD" id="cd12152">
    <property type="entry name" value="F1-ATPase_delta"/>
    <property type="match status" value="1"/>
</dbReference>
<dbReference type="FunFam" id="1.20.5.440:FF:000001">
    <property type="entry name" value="ATP synthase epsilon chain"/>
    <property type="match status" value="1"/>
</dbReference>
<dbReference type="FunFam" id="2.60.15.10:FF:000001">
    <property type="entry name" value="ATP synthase epsilon chain"/>
    <property type="match status" value="1"/>
</dbReference>
<dbReference type="Gene3D" id="1.20.5.440">
    <property type="entry name" value="ATP synthase delta/epsilon subunit, C-terminal domain"/>
    <property type="match status" value="1"/>
</dbReference>
<dbReference type="Gene3D" id="2.60.15.10">
    <property type="entry name" value="F0F1 ATP synthase delta/epsilon subunit, N-terminal"/>
    <property type="match status" value="1"/>
</dbReference>
<dbReference type="HAMAP" id="MF_00530">
    <property type="entry name" value="ATP_synth_epsil_bac"/>
    <property type="match status" value="1"/>
</dbReference>
<dbReference type="InterPro" id="IPR036794">
    <property type="entry name" value="ATP_F1_dsu/esu_C_sf"/>
</dbReference>
<dbReference type="InterPro" id="IPR001469">
    <property type="entry name" value="ATP_synth_F1_dsu/esu"/>
</dbReference>
<dbReference type="InterPro" id="IPR020546">
    <property type="entry name" value="ATP_synth_F1_dsu/esu_N"/>
</dbReference>
<dbReference type="InterPro" id="IPR020547">
    <property type="entry name" value="ATP_synth_F1_esu_C"/>
</dbReference>
<dbReference type="InterPro" id="IPR036771">
    <property type="entry name" value="ATPsynth_dsu/esu_N"/>
</dbReference>
<dbReference type="NCBIfam" id="TIGR01216">
    <property type="entry name" value="ATP_synt_epsi"/>
    <property type="match status" value="1"/>
</dbReference>
<dbReference type="NCBIfam" id="NF001847">
    <property type="entry name" value="PRK00571.1-4"/>
    <property type="match status" value="1"/>
</dbReference>
<dbReference type="PANTHER" id="PTHR13822">
    <property type="entry name" value="ATP SYNTHASE DELTA/EPSILON CHAIN"/>
    <property type="match status" value="1"/>
</dbReference>
<dbReference type="PANTHER" id="PTHR13822:SF10">
    <property type="entry name" value="ATP SYNTHASE EPSILON CHAIN, CHLOROPLASTIC"/>
    <property type="match status" value="1"/>
</dbReference>
<dbReference type="Pfam" id="PF00401">
    <property type="entry name" value="ATP-synt_DE"/>
    <property type="match status" value="1"/>
</dbReference>
<dbReference type="Pfam" id="PF02823">
    <property type="entry name" value="ATP-synt_DE_N"/>
    <property type="match status" value="1"/>
</dbReference>
<dbReference type="SUPFAM" id="SSF46604">
    <property type="entry name" value="Epsilon subunit of F1F0-ATP synthase C-terminal domain"/>
    <property type="match status" value="1"/>
</dbReference>
<dbReference type="SUPFAM" id="SSF51344">
    <property type="entry name" value="Epsilon subunit of F1F0-ATP synthase N-terminal domain"/>
    <property type="match status" value="1"/>
</dbReference>
<proteinExistence type="inferred from homology"/>
<name>ATPE_DECAR</name>
<reference key="1">
    <citation type="journal article" date="2009" name="BMC Genomics">
        <title>Metabolic analysis of the soil microbe Dechloromonas aromatica str. RCB: indications of a surprisingly complex life-style and cryptic anaerobic pathways for aromatic degradation.</title>
        <authorList>
            <person name="Salinero K.K."/>
            <person name="Keller K."/>
            <person name="Feil W.S."/>
            <person name="Feil H."/>
            <person name="Trong S."/>
            <person name="Di Bartolo G."/>
            <person name="Lapidus A."/>
        </authorList>
    </citation>
    <scope>NUCLEOTIDE SEQUENCE [LARGE SCALE GENOMIC DNA]</scope>
    <source>
        <strain>RCB</strain>
    </source>
</reference>
<accession>Q477Z0</accession>
<organism>
    <name type="scientific">Dechloromonas aromatica (strain RCB)</name>
    <dbReference type="NCBI Taxonomy" id="159087"/>
    <lineage>
        <taxon>Bacteria</taxon>
        <taxon>Pseudomonadati</taxon>
        <taxon>Pseudomonadota</taxon>
        <taxon>Betaproteobacteria</taxon>
        <taxon>Rhodocyclales</taxon>
        <taxon>Azonexaceae</taxon>
        <taxon>Dechloromonas</taxon>
    </lineage>
</organism>
<sequence>MAMTVHCDVVSAEESIFSGLVEIAVFPGEAGELGILPRHTPLLTRIKPGTIRLKVPDQSEFELVYVSGGMLEVQPDMITVLADTAIRAHDLDEAKALEAKKRAEEALANRNAEMDYAAAEAELAQAVAQLQAIQRLRKHTH</sequence>
<gene>
    <name evidence="1" type="primary">atpC</name>
    <name type="ordered locus">Daro_4115</name>
</gene>
<evidence type="ECO:0000255" key="1">
    <source>
        <dbReference type="HAMAP-Rule" id="MF_00530"/>
    </source>
</evidence>
<feature type="chain" id="PRO_0000265805" description="ATP synthase epsilon chain">
    <location>
        <begin position="1"/>
        <end position="141"/>
    </location>
</feature>
<keyword id="KW-0066">ATP synthesis</keyword>
<keyword id="KW-0997">Cell inner membrane</keyword>
<keyword id="KW-1003">Cell membrane</keyword>
<keyword id="KW-0139">CF(1)</keyword>
<keyword id="KW-0375">Hydrogen ion transport</keyword>
<keyword id="KW-0406">Ion transport</keyword>
<keyword id="KW-0472">Membrane</keyword>
<keyword id="KW-0813">Transport</keyword>